<sequence length="262" mass="27267">MQVDLLGSAQSAHALHLFHQHSPLVHCMTNDVVQTFTANTLLALGASPAMVIETEEASQFAAIASALLINVGTLTQPRAQAMRAAVEQAKSSQTPWTLDPVAVGALDYRRHFCHELLSFKPAAIRGNASEIMALAGIANGGRGVDTTDAAANAIPAAQTLARETGAIVVVTGEVDYVTDGHRAVGIHGGDPLMTKVVGTGCALSAVVAACCALPGDTLENVASACHWMKQAGERAVARSEGLGSFVPHFLDALWQLTQEVQA</sequence>
<protein>
    <recommendedName>
        <fullName evidence="1">Hydroxyethylthiazole kinase</fullName>
        <ecNumber evidence="1">2.7.1.50</ecNumber>
    </recommendedName>
    <alternativeName>
        <fullName evidence="1">4-methyl-5-beta-hydroxyethylthiazole kinase</fullName>
        <shortName evidence="1">TH kinase</shortName>
        <shortName evidence="1">Thz kinase</shortName>
    </alternativeName>
</protein>
<gene>
    <name evidence="1" type="primary">thiM</name>
    <name type="ordered locus">SSON_2152</name>
</gene>
<organism>
    <name type="scientific">Shigella sonnei (strain Ss046)</name>
    <dbReference type="NCBI Taxonomy" id="300269"/>
    <lineage>
        <taxon>Bacteria</taxon>
        <taxon>Pseudomonadati</taxon>
        <taxon>Pseudomonadota</taxon>
        <taxon>Gammaproteobacteria</taxon>
        <taxon>Enterobacterales</taxon>
        <taxon>Enterobacteriaceae</taxon>
        <taxon>Shigella</taxon>
    </lineage>
</organism>
<comment type="function">
    <text evidence="1">Catalyzes the phosphorylation of the hydroxyl group of 4-methyl-5-beta-hydroxyethylthiazole (THZ).</text>
</comment>
<comment type="catalytic activity">
    <reaction evidence="1">
        <text>5-(2-hydroxyethyl)-4-methylthiazole + ATP = 4-methyl-5-(2-phosphooxyethyl)-thiazole + ADP + H(+)</text>
        <dbReference type="Rhea" id="RHEA:24212"/>
        <dbReference type="ChEBI" id="CHEBI:15378"/>
        <dbReference type="ChEBI" id="CHEBI:17957"/>
        <dbReference type="ChEBI" id="CHEBI:30616"/>
        <dbReference type="ChEBI" id="CHEBI:58296"/>
        <dbReference type="ChEBI" id="CHEBI:456216"/>
        <dbReference type="EC" id="2.7.1.50"/>
    </reaction>
</comment>
<comment type="cofactor">
    <cofactor evidence="1">
        <name>Mg(2+)</name>
        <dbReference type="ChEBI" id="CHEBI:18420"/>
    </cofactor>
</comment>
<comment type="pathway">
    <text evidence="1">Cofactor biosynthesis; thiamine diphosphate biosynthesis; 4-methyl-5-(2-phosphoethyl)-thiazole from 5-(2-hydroxyethyl)-4-methylthiazole: step 1/1.</text>
</comment>
<comment type="similarity">
    <text evidence="1">Belongs to the Thz kinase family.</text>
</comment>
<reference key="1">
    <citation type="journal article" date="2005" name="Nucleic Acids Res.">
        <title>Genome dynamics and diversity of Shigella species, the etiologic agents of bacillary dysentery.</title>
        <authorList>
            <person name="Yang F."/>
            <person name="Yang J."/>
            <person name="Zhang X."/>
            <person name="Chen L."/>
            <person name="Jiang Y."/>
            <person name="Yan Y."/>
            <person name="Tang X."/>
            <person name="Wang J."/>
            <person name="Xiong Z."/>
            <person name="Dong J."/>
            <person name="Xue Y."/>
            <person name="Zhu Y."/>
            <person name="Xu X."/>
            <person name="Sun L."/>
            <person name="Chen S."/>
            <person name="Nie H."/>
            <person name="Peng J."/>
            <person name="Xu J."/>
            <person name="Wang Y."/>
            <person name="Yuan Z."/>
            <person name="Wen Y."/>
            <person name="Yao Z."/>
            <person name="Shen Y."/>
            <person name="Qiang B."/>
            <person name="Hou Y."/>
            <person name="Yu J."/>
            <person name="Jin Q."/>
        </authorList>
    </citation>
    <scope>NUCLEOTIDE SEQUENCE [LARGE SCALE GENOMIC DNA]</scope>
    <source>
        <strain>Ss046</strain>
    </source>
</reference>
<accession>Q3Z0A6</accession>
<proteinExistence type="inferred from homology"/>
<evidence type="ECO:0000255" key="1">
    <source>
        <dbReference type="HAMAP-Rule" id="MF_00228"/>
    </source>
</evidence>
<name>THIM_SHISS</name>
<feature type="chain" id="PRO_1000021530" description="Hydroxyethylthiazole kinase">
    <location>
        <begin position="1"/>
        <end position="262"/>
    </location>
</feature>
<feature type="binding site" evidence="1">
    <location>
        <position position="50"/>
    </location>
    <ligand>
        <name>substrate</name>
    </ligand>
</feature>
<feature type="binding site" evidence="1">
    <location>
        <position position="125"/>
    </location>
    <ligand>
        <name>ATP</name>
        <dbReference type="ChEBI" id="CHEBI:30616"/>
    </ligand>
</feature>
<feature type="binding site" evidence="1">
    <location>
        <position position="171"/>
    </location>
    <ligand>
        <name>ATP</name>
        <dbReference type="ChEBI" id="CHEBI:30616"/>
    </ligand>
</feature>
<feature type="binding site" evidence="1">
    <location>
        <position position="198"/>
    </location>
    <ligand>
        <name>substrate</name>
    </ligand>
</feature>
<dbReference type="EC" id="2.7.1.50" evidence="1"/>
<dbReference type="EMBL" id="CP000038">
    <property type="protein sequence ID" value="AAZ88806.1"/>
    <property type="molecule type" value="Genomic_DNA"/>
</dbReference>
<dbReference type="RefSeq" id="WP_001195565.1">
    <property type="nucleotide sequence ID" value="NC_007384.1"/>
</dbReference>
<dbReference type="SMR" id="Q3Z0A6"/>
<dbReference type="GeneID" id="93775090"/>
<dbReference type="KEGG" id="ssn:SSON_2152"/>
<dbReference type="HOGENOM" id="CLU_019943_0_1_6"/>
<dbReference type="UniPathway" id="UPA00060">
    <property type="reaction ID" value="UER00139"/>
</dbReference>
<dbReference type="Proteomes" id="UP000002529">
    <property type="component" value="Chromosome"/>
</dbReference>
<dbReference type="GO" id="GO:0005524">
    <property type="term" value="F:ATP binding"/>
    <property type="evidence" value="ECO:0007669"/>
    <property type="project" value="UniProtKB-UniRule"/>
</dbReference>
<dbReference type="GO" id="GO:0004417">
    <property type="term" value="F:hydroxyethylthiazole kinase activity"/>
    <property type="evidence" value="ECO:0007669"/>
    <property type="project" value="UniProtKB-UniRule"/>
</dbReference>
<dbReference type="GO" id="GO:0000287">
    <property type="term" value="F:magnesium ion binding"/>
    <property type="evidence" value="ECO:0007669"/>
    <property type="project" value="UniProtKB-UniRule"/>
</dbReference>
<dbReference type="GO" id="GO:0009228">
    <property type="term" value="P:thiamine biosynthetic process"/>
    <property type="evidence" value="ECO:0007669"/>
    <property type="project" value="UniProtKB-KW"/>
</dbReference>
<dbReference type="GO" id="GO:0009229">
    <property type="term" value="P:thiamine diphosphate biosynthetic process"/>
    <property type="evidence" value="ECO:0007669"/>
    <property type="project" value="UniProtKB-UniRule"/>
</dbReference>
<dbReference type="CDD" id="cd01170">
    <property type="entry name" value="THZ_kinase"/>
    <property type="match status" value="1"/>
</dbReference>
<dbReference type="FunFam" id="3.40.1190.20:FF:000015">
    <property type="entry name" value="Hydroxyethylthiazole kinase"/>
    <property type="match status" value="1"/>
</dbReference>
<dbReference type="Gene3D" id="3.40.1190.20">
    <property type="match status" value="1"/>
</dbReference>
<dbReference type="HAMAP" id="MF_00228">
    <property type="entry name" value="Thz_kinase"/>
    <property type="match status" value="1"/>
</dbReference>
<dbReference type="InterPro" id="IPR000417">
    <property type="entry name" value="Hyethyz_kinase"/>
</dbReference>
<dbReference type="InterPro" id="IPR029056">
    <property type="entry name" value="Ribokinase-like"/>
</dbReference>
<dbReference type="NCBIfam" id="NF006830">
    <property type="entry name" value="PRK09355.1"/>
    <property type="match status" value="1"/>
</dbReference>
<dbReference type="NCBIfam" id="TIGR00694">
    <property type="entry name" value="thiM"/>
    <property type="match status" value="1"/>
</dbReference>
<dbReference type="Pfam" id="PF02110">
    <property type="entry name" value="HK"/>
    <property type="match status" value="1"/>
</dbReference>
<dbReference type="PIRSF" id="PIRSF000513">
    <property type="entry name" value="Thz_kinase"/>
    <property type="match status" value="1"/>
</dbReference>
<dbReference type="PRINTS" id="PR01099">
    <property type="entry name" value="HYETHTZKNASE"/>
</dbReference>
<dbReference type="SUPFAM" id="SSF53613">
    <property type="entry name" value="Ribokinase-like"/>
    <property type="match status" value="1"/>
</dbReference>
<keyword id="KW-0067">ATP-binding</keyword>
<keyword id="KW-0418">Kinase</keyword>
<keyword id="KW-0460">Magnesium</keyword>
<keyword id="KW-0479">Metal-binding</keyword>
<keyword id="KW-0547">Nucleotide-binding</keyword>
<keyword id="KW-1185">Reference proteome</keyword>
<keyword id="KW-0784">Thiamine biosynthesis</keyword>
<keyword id="KW-0808">Transferase</keyword>